<gene>
    <name evidence="2" type="primary">rpsL</name>
    <name type="ordered locus">Dred_0210</name>
</gene>
<feature type="chain" id="PRO_1000072255" description="Small ribosomal subunit protein uS12">
    <location>
        <begin position="1"/>
        <end position="124"/>
    </location>
</feature>
<feature type="region of interest" description="Disordered" evidence="3">
    <location>
        <begin position="104"/>
        <end position="124"/>
    </location>
</feature>
<feature type="compositionally biased region" description="Basic residues" evidence="3">
    <location>
        <begin position="111"/>
        <end position="124"/>
    </location>
</feature>
<feature type="modified residue" description="3-methylthioaspartic acid" evidence="1">
    <location>
        <position position="89"/>
    </location>
</feature>
<organism>
    <name type="scientific">Desulforamulus reducens (strain ATCC BAA-1160 / DSM 100696 / MI-1)</name>
    <name type="common">Desulfotomaculum reducens</name>
    <dbReference type="NCBI Taxonomy" id="349161"/>
    <lineage>
        <taxon>Bacteria</taxon>
        <taxon>Bacillati</taxon>
        <taxon>Bacillota</taxon>
        <taxon>Clostridia</taxon>
        <taxon>Eubacteriales</taxon>
        <taxon>Peptococcaceae</taxon>
        <taxon>Desulforamulus</taxon>
    </lineage>
</organism>
<sequence length="124" mass="13828">MPTINQLIRKGREQVVYKSTAPALKECPQKRGVCTRVYTTTPKKPNSALRKVARVRLTNGIEVTSYIPGIGHNLQEHSVVLVRGGRVKDLPGVRYHIVRGALDSAGVQNRNRGRSKYGTKRPKK</sequence>
<comment type="function">
    <text evidence="2">With S4 and S5 plays an important role in translational accuracy.</text>
</comment>
<comment type="function">
    <text evidence="2">Interacts with and stabilizes bases of the 16S rRNA that are involved in tRNA selection in the A site and with the mRNA backbone. Located at the interface of the 30S and 50S subunits, it traverses the body of the 30S subunit contacting proteins on the other side and probably holding the rRNA structure together. The combined cluster of proteins S8, S12 and S17 appears to hold together the shoulder and platform of the 30S subunit.</text>
</comment>
<comment type="subunit">
    <text evidence="2">Part of the 30S ribosomal subunit. Contacts proteins S8 and S17. May interact with IF1 in the 30S initiation complex.</text>
</comment>
<comment type="similarity">
    <text evidence="2">Belongs to the universal ribosomal protein uS12 family.</text>
</comment>
<keyword id="KW-0488">Methylation</keyword>
<keyword id="KW-1185">Reference proteome</keyword>
<keyword id="KW-0687">Ribonucleoprotein</keyword>
<keyword id="KW-0689">Ribosomal protein</keyword>
<keyword id="KW-0694">RNA-binding</keyword>
<keyword id="KW-0699">rRNA-binding</keyword>
<keyword id="KW-0820">tRNA-binding</keyword>
<evidence type="ECO:0000250" key="1"/>
<evidence type="ECO:0000255" key="2">
    <source>
        <dbReference type="HAMAP-Rule" id="MF_00403"/>
    </source>
</evidence>
<evidence type="ECO:0000256" key="3">
    <source>
        <dbReference type="SAM" id="MobiDB-lite"/>
    </source>
</evidence>
<evidence type="ECO:0000305" key="4"/>
<reference key="1">
    <citation type="submission" date="2007-03" db="EMBL/GenBank/DDBJ databases">
        <title>Complete sequence of Desulfotomaculum reducens MI-1.</title>
        <authorList>
            <consortium name="US DOE Joint Genome Institute"/>
            <person name="Copeland A."/>
            <person name="Lucas S."/>
            <person name="Lapidus A."/>
            <person name="Barry K."/>
            <person name="Detter J.C."/>
            <person name="Glavina del Rio T."/>
            <person name="Hammon N."/>
            <person name="Israni S."/>
            <person name="Dalin E."/>
            <person name="Tice H."/>
            <person name="Pitluck S."/>
            <person name="Sims D."/>
            <person name="Brettin T."/>
            <person name="Bruce D."/>
            <person name="Han C."/>
            <person name="Tapia R."/>
            <person name="Schmutz J."/>
            <person name="Larimer F."/>
            <person name="Land M."/>
            <person name="Hauser L."/>
            <person name="Kyrpides N."/>
            <person name="Kim E."/>
            <person name="Tebo B.M."/>
            <person name="Richardson P."/>
        </authorList>
    </citation>
    <scope>NUCLEOTIDE SEQUENCE [LARGE SCALE GENOMIC DNA]</scope>
    <source>
        <strain>ATCC BAA-1160 / DSM 100696 / MI-1</strain>
    </source>
</reference>
<proteinExistence type="inferred from homology"/>
<name>RS12_DESRM</name>
<dbReference type="EMBL" id="CP000612">
    <property type="protein sequence ID" value="ABO48759.1"/>
    <property type="molecule type" value="Genomic_DNA"/>
</dbReference>
<dbReference type="RefSeq" id="WP_011876600.1">
    <property type="nucleotide sequence ID" value="NC_009253.1"/>
</dbReference>
<dbReference type="SMR" id="A4J106"/>
<dbReference type="STRING" id="349161.Dred_0210"/>
<dbReference type="KEGG" id="drm:Dred_0210"/>
<dbReference type="eggNOG" id="COG0048">
    <property type="taxonomic scope" value="Bacteria"/>
</dbReference>
<dbReference type="HOGENOM" id="CLU_104295_1_2_9"/>
<dbReference type="OrthoDB" id="9802366at2"/>
<dbReference type="Proteomes" id="UP000001556">
    <property type="component" value="Chromosome"/>
</dbReference>
<dbReference type="GO" id="GO:0015935">
    <property type="term" value="C:small ribosomal subunit"/>
    <property type="evidence" value="ECO:0007669"/>
    <property type="project" value="InterPro"/>
</dbReference>
<dbReference type="GO" id="GO:0019843">
    <property type="term" value="F:rRNA binding"/>
    <property type="evidence" value="ECO:0007669"/>
    <property type="project" value="UniProtKB-UniRule"/>
</dbReference>
<dbReference type="GO" id="GO:0003735">
    <property type="term" value="F:structural constituent of ribosome"/>
    <property type="evidence" value="ECO:0007669"/>
    <property type="project" value="InterPro"/>
</dbReference>
<dbReference type="GO" id="GO:0000049">
    <property type="term" value="F:tRNA binding"/>
    <property type="evidence" value="ECO:0007669"/>
    <property type="project" value="UniProtKB-UniRule"/>
</dbReference>
<dbReference type="GO" id="GO:0006412">
    <property type="term" value="P:translation"/>
    <property type="evidence" value="ECO:0007669"/>
    <property type="project" value="UniProtKB-UniRule"/>
</dbReference>
<dbReference type="CDD" id="cd03368">
    <property type="entry name" value="Ribosomal_S12"/>
    <property type="match status" value="1"/>
</dbReference>
<dbReference type="FunFam" id="2.40.50.140:FF:000001">
    <property type="entry name" value="30S ribosomal protein S12"/>
    <property type="match status" value="1"/>
</dbReference>
<dbReference type="Gene3D" id="2.40.50.140">
    <property type="entry name" value="Nucleic acid-binding proteins"/>
    <property type="match status" value="1"/>
</dbReference>
<dbReference type="HAMAP" id="MF_00403_B">
    <property type="entry name" value="Ribosomal_uS12_B"/>
    <property type="match status" value="1"/>
</dbReference>
<dbReference type="InterPro" id="IPR012340">
    <property type="entry name" value="NA-bd_OB-fold"/>
</dbReference>
<dbReference type="InterPro" id="IPR006032">
    <property type="entry name" value="Ribosomal_uS12"/>
</dbReference>
<dbReference type="InterPro" id="IPR005679">
    <property type="entry name" value="Ribosomal_uS12_bac"/>
</dbReference>
<dbReference type="NCBIfam" id="TIGR00981">
    <property type="entry name" value="rpsL_bact"/>
    <property type="match status" value="1"/>
</dbReference>
<dbReference type="PANTHER" id="PTHR11652">
    <property type="entry name" value="30S RIBOSOMAL PROTEIN S12 FAMILY MEMBER"/>
    <property type="match status" value="1"/>
</dbReference>
<dbReference type="Pfam" id="PF00164">
    <property type="entry name" value="Ribosom_S12_S23"/>
    <property type="match status" value="1"/>
</dbReference>
<dbReference type="PIRSF" id="PIRSF002133">
    <property type="entry name" value="Ribosomal_S12/S23"/>
    <property type="match status" value="1"/>
</dbReference>
<dbReference type="PRINTS" id="PR01034">
    <property type="entry name" value="RIBOSOMALS12"/>
</dbReference>
<dbReference type="SUPFAM" id="SSF50249">
    <property type="entry name" value="Nucleic acid-binding proteins"/>
    <property type="match status" value="1"/>
</dbReference>
<dbReference type="PROSITE" id="PS00055">
    <property type="entry name" value="RIBOSOMAL_S12"/>
    <property type="match status" value="1"/>
</dbReference>
<protein>
    <recommendedName>
        <fullName evidence="2">Small ribosomal subunit protein uS12</fullName>
    </recommendedName>
    <alternativeName>
        <fullName evidence="4">30S ribosomal protein S12</fullName>
    </alternativeName>
</protein>
<accession>A4J106</accession>